<protein>
    <recommendedName>
        <fullName evidence="1">Lipoprotein-releasing system ATP-binding protein LolD</fullName>
        <ecNumber evidence="1">7.6.2.-</ecNumber>
    </recommendedName>
</protein>
<dbReference type="EC" id="7.6.2.-" evidence="1"/>
<dbReference type="EMBL" id="CP000075">
    <property type="protein sequence ID" value="AAY36949.1"/>
    <property type="status" value="ALT_INIT"/>
    <property type="molecule type" value="Genomic_DNA"/>
</dbReference>
<dbReference type="RefSeq" id="YP_234987.1">
    <property type="nucleotide sequence ID" value="NC_007005.1"/>
</dbReference>
<dbReference type="SMR" id="Q4ZV73"/>
<dbReference type="STRING" id="205918.Psyr_1905"/>
<dbReference type="KEGG" id="psb:Psyr_1905"/>
<dbReference type="PATRIC" id="fig|205918.7.peg.1949"/>
<dbReference type="eggNOG" id="COG1136">
    <property type="taxonomic scope" value="Bacteria"/>
</dbReference>
<dbReference type="HOGENOM" id="CLU_000604_1_22_6"/>
<dbReference type="OrthoDB" id="9801477at2"/>
<dbReference type="Proteomes" id="UP000000426">
    <property type="component" value="Chromosome"/>
</dbReference>
<dbReference type="GO" id="GO:0005886">
    <property type="term" value="C:plasma membrane"/>
    <property type="evidence" value="ECO:0007669"/>
    <property type="project" value="UniProtKB-SubCell"/>
</dbReference>
<dbReference type="GO" id="GO:0005524">
    <property type="term" value="F:ATP binding"/>
    <property type="evidence" value="ECO:0007669"/>
    <property type="project" value="UniProtKB-KW"/>
</dbReference>
<dbReference type="GO" id="GO:0016887">
    <property type="term" value="F:ATP hydrolysis activity"/>
    <property type="evidence" value="ECO:0007669"/>
    <property type="project" value="InterPro"/>
</dbReference>
<dbReference type="GO" id="GO:0022857">
    <property type="term" value="F:transmembrane transporter activity"/>
    <property type="evidence" value="ECO:0007669"/>
    <property type="project" value="TreeGrafter"/>
</dbReference>
<dbReference type="GO" id="GO:0044874">
    <property type="term" value="P:lipoprotein localization to outer membrane"/>
    <property type="evidence" value="ECO:0007669"/>
    <property type="project" value="TreeGrafter"/>
</dbReference>
<dbReference type="GO" id="GO:0089705">
    <property type="term" value="P:protein localization to outer membrane"/>
    <property type="evidence" value="ECO:0007669"/>
    <property type="project" value="TreeGrafter"/>
</dbReference>
<dbReference type="CDD" id="cd03255">
    <property type="entry name" value="ABC_MJ0796_LolCDE_FtsE"/>
    <property type="match status" value="1"/>
</dbReference>
<dbReference type="FunFam" id="3.40.50.300:FF:000230">
    <property type="entry name" value="Lipoprotein-releasing system ATP-binding protein LolD"/>
    <property type="match status" value="1"/>
</dbReference>
<dbReference type="Gene3D" id="3.40.50.300">
    <property type="entry name" value="P-loop containing nucleotide triphosphate hydrolases"/>
    <property type="match status" value="1"/>
</dbReference>
<dbReference type="InterPro" id="IPR003593">
    <property type="entry name" value="AAA+_ATPase"/>
</dbReference>
<dbReference type="InterPro" id="IPR003439">
    <property type="entry name" value="ABC_transporter-like_ATP-bd"/>
</dbReference>
<dbReference type="InterPro" id="IPR017871">
    <property type="entry name" value="ABC_transporter-like_CS"/>
</dbReference>
<dbReference type="InterPro" id="IPR015854">
    <property type="entry name" value="ABC_transpr_LolD-like"/>
</dbReference>
<dbReference type="InterPro" id="IPR011924">
    <property type="entry name" value="LolD_lipo_ATP-bd"/>
</dbReference>
<dbReference type="InterPro" id="IPR017911">
    <property type="entry name" value="MacB-like_ATP-bd"/>
</dbReference>
<dbReference type="InterPro" id="IPR027417">
    <property type="entry name" value="P-loop_NTPase"/>
</dbReference>
<dbReference type="NCBIfam" id="TIGR02211">
    <property type="entry name" value="LolD_lipo_ex"/>
    <property type="match status" value="1"/>
</dbReference>
<dbReference type="PANTHER" id="PTHR24220">
    <property type="entry name" value="IMPORT ATP-BINDING PROTEIN"/>
    <property type="match status" value="1"/>
</dbReference>
<dbReference type="PANTHER" id="PTHR24220:SF689">
    <property type="entry name" value="LIPOPROTEIN-RELEASING SYSTEM ATP-BINDING PROTEIN LOLD"/>
    <property type="match status" value="1"/>
</dbReference>
<dbReference type="Pfam" id="PF00005">
    <property type="entry name" value="ABC_tran"/>
    <property type="match status" value="1"/>
</dbReference>
<dbReference type="SMART" id="SM00382">
    <property type="entry name" value="AAA"/>
    <property type="match status" value="1"/>
</dbReference>
<dbReference type="SUPFAM" id="SSF52540">
    <property type="entry name" value="P-loop containing nucleoside triphosphate hydrolases"/>
    <property type="match status" value="1"/>
</dbReference>
<dbReference type="PROSITE" id="PS00211">
    <property type="entry name" value="ABC_TRANSPORTER_1"/>
    <property type="match status" value="1"/>
</dbReference>
<dbReference type="PROSITE" id="PS50893">
    <property type="entry name" value="ABC_TRANSPORTER_2"/>
    <property type="match status" value="1"/>
</dbReference>
<dbReference type="PROSITE" id="PS51244">
    <property type="entry name" value="LOLD"/>
    <property type="match status" value="1"/>
</dbReference>
<sequence length="227" mass="24638">MSDKAVLSCRNLGKSYEEGPESVVVLSGLQLELHPGERVAIVGSSGSGKSTLLNLLGGLDTPSEGSVWLAGEELSALGEKARGLLRNRALGFVYQFHHLLPEFTALENVCMPLLIGRTPIPEARKRSTALLERVGLGHRLAHKPSELSGGERQRVAIARALINQPGLVMLDEPTGNLDHHTAQGIQDLMRELSTSSRTAFLIVTHDMSLARQMDRVLRLEDGRLVEA</sequence>
<evidence type="ECO:0000255" key="1">
    <source>
        <dbReference type="HAMAP-Rule" id="MF_01708"/>
    </source>
</evidence>
<evidence type="ECO:0000305" key="2"/>
<keyword id="KW-0067">ATP-binding</keyword>
<keyword id="KW-0997">Cell inner membrane</keyword>
<keyword id="KW-1003">Cell membrane</keyword>
<keyword id="KW-0472">Membrane</keyword>
<keyword id="KW-0547">Nucleotide-binding</keyword>
<keyword id="KW-1278">Translocase</keyword>
<keyword id="KW-0813">Transport</keyword>
<proteinExistence type="inferred from homology"/>
<organism>
    <name type="scientific">Pseudomonas syringae pv. syringae (strain B728a)</name>
    <dbReference type="NCBI Taxonomy" id="205918"/>
    <lineage>
        <taxon>Bacteria</taxon>
        <taxon>Pseudomonadati</taxon>
        <taxon>Pseudomonadota</taxon>
        <taxon>Gammaproteobacteria</taxon>
        <taxon>Pseudomonadales</taxon>
        <taxon>Pseudomonadaceae</taxon>
        <taxon>Pseudomonas</taxon>
        <taxon>Pseudomonas syringae</taxon>
    </lineage>
</organism>
<name>LOLD_PSEU2</name>
<comment type="function">
    <text evidence="1">Part of the ABC transporter complex LolCDE involved in the translocation of mature outer membrane-directed lipoproteins, from the inner membrane to the periplasmic chaperone, LolA. Responsible for the formation of the LolA-lipoprotein complex in an ATP-dependent manner.</text>
</comment>
<comment type="subunit">
    <text evidence="1">The complex is composed of two ATP-binding proteins (LolD) and two transmembrane proteins (LolC and LolE).</text>
</comment>
<comment type="subcellular location">
    <subcellularLocation>
        <location evidence="1">Cell inner membrane</location>
        <topology evidence="1">Peripheral membrane protein</topology>
    </subcellularLocation>
</comment>
<comment type="similarity">
    <text evidence="1">Belongs to the ABC transporter superfamily. Lipoprotein translocase (TC 3.A.1.125) family.</text>
</comment>
<comment type="sequence caution" evidence="2">
    <conflict type="erroneous initiation">
        <sequence resource="EMBL-CDS" id="AAY36949"/>
    </conflict>
</comment>
<accession>Q4ZV73</accession>
<feature type="chain" id="PRO_0000272127" description="Lipoprotein-releasing system ATP-binding protein LolD">
    <location>
        <begin position="1"/>
        <end position="227"/>
    </location>
</feature>
<feature type="domain" description="ABC transporter" evidence="1">
    <location>
        <begin position="7"/>
        <end position="227"/>
    </location>
</feature>
<feature type="binding site" evidence="1">
    <location>
        <begin position="43"/>
        <end position="50"/>
    </location>
    <ligand>
        <name>ATP</name>
        <dbReference type="ChEBI" id="CHEBI:30616"/>
    </ligand>
</feature>
<reference key="1">
    <citation type="journal article" date="2005" name="Proc. Natl. Acad. Sci. U.S.A.">
        <title>Comparison of the complete genome sequences of Pseudomonas syringae pv. syringae B728a and pv. tomato DC3000.</title>
        <authorList>
            <person name="Feil H."/>
            <person name="Feil W.S."/>
            <person name="Chain P."/>
            <person name="Larimer F."/>
            <person name="Dibartolo G."/>
            <person name="Copeland A."/>
            <person name="Lykidis A."/>
            <person name="Trong S."/>
            <person name="Nolan M."/>
            <person name="Goltsman E."/>
            <person name="Thiel J."/>
            <person name="Malfatti S."/>
            <person name="Loper J.E."/>
            <person name="Lapidus A."/>
            <person name="Detter J.C."/>
            <person name="Land M."/>
            <person name="Richardson P.M."/>
            <person name="Kyrpides N.C."/>
            <person name="Ivanova N."/>
            <person name="Lindow S.E."/>
        </authorList>
    </citation>
    <scope>NUCLEOTIDE SEQUENCE [LARGE SCALE GENOMIC DNA]</scope>
    <source>
        <strain>B728a</strain>
    </source>
</reference>
<gene>
    <name evidence="1" type="primary">lolD</name>
    <name type="ordered locus">Psyr_1905</name>
</gene>